<proteinExistence type="inferred from homology"/>
<organism>
    <name type="scientific">Clostridium botulinum (strain Alaska E43 / Type E3)</name>
    <dbReference type="NCBI Taxonomy" id="508767"/>
    <lineage>
        <taxon>Bacteria</taxon>
        <taxon>Bacillati</taxon>
        <taxon>Bacillota</taxon>
        <taxon>Clostridia</taxon>
        <taxon>Eubacteriales</taxon>
        <taxon>Clostridiaceae</taxon>
        <taxon>Clostridium</taxon>
    </lineage>
</organism>
<reference key="1">
    <citation type="submission" date="2008-05" db="EMBL/GenBank/DDBJ databases">
        <title>Complete genome sequence of Clostridium botulinum E3 str. Alaska E43.</title>
        <authorList>
            <person name="Brinkac L.M."/>
            <person name="Brown J.L."/>
            <person name="Bruce D."/>
            <person name="Detter C."/>
            <person name="Munk C."/>
            <person name="Smith L.A."/>
            <person name="Smith T.J."/>
            <person name="Sutton G."/>
            <person name="Brettin T.S."/>
        </authorList>
    </citation>
    <scope>NUCLEOTIDE SEQUENCE [LARGE SCALE GENOMIC DNA]</scope>
    <source>
        <strain>Alaska E43 / Type E3</strain>
    </source>
</reference>
<accession>B2V4I3</accession>
<evidence type="ECO:0000255" key="1">
    <source>
        <dbReference type="HAMAP-Rule" id="MF_00268"/>
    </source>
</evidence>
<sequence>MANIDINKLKAIENAMGQIEKQFGKGSVMKLGEDSVLNIDAISTGCLDLDIALGIGGVPKGRIVEIYGPESSGKTTIALHIAAEAQKKGGAVGFIDAEHALDPSYARNLGVDTENLIVSQPDTGEQGLEIAEALVRSGAIDVIIVDSVAALVPKAEIEGEMGDSHIGLQARLMSQALRKLAGTISKTNCIAIFINQLREKVGVMFGSPETTTGGRALKFYASVRLDVRRIDSIKQGDGIVGNRTRIKVTKNKVAPPFKQAEFDIMYNEGISREGNIVDVGVKEEIVQKSGAWFSYGDIRLGQGRENAKQYLKENPEVALDIENQIREKHNLPLMDAVIKETSQEVKGKENKEQSDK</sequence>
<dbReference type="EMBL" id="CP001078">
    <property type="protein sequence ID" value="ACD51559.1"/>
    <property type="molecule type" value="Genomic_DNA"/>
</dbReference>
<dbReference type="RefSeq" id="WP_012449893.1">
    <property type="nucleotide sequence ID" value="NC_010723.1"/>
</dbReference>
<dbReference type="SMR" id="B2V4I3"/>
<dbReference type="KEGG" id="cbt:CLH_1238"/>
<dbReference type="HOGENOM" id="CLU_040469_3_2_9"/>
<dbReference type="GO" id="GO:0005829">
    <property type="term" value="C:cytosol"/>
    <property type="evidence" value="ECO:0007669"/>
    <property type="project" value="TreeGrafter"/>
</dbReference>
<dbReference type="GO" id="GO:0005524">
    <property type="term" value="F:ATP binding"/>
    <property type="evidence" value="ECO:0007669"/>
    <property type="project" value="UniProtKB-UniRule"/>
</dbReference>
<dbReference type="GO" id="GO:0016887">
    <property type="term" value="F:ATP hydrolysis activity"/>
    <property type="evidence" value="ECO:0007669"/>
    <property type="project" value="InterPro"/>
</dbReference>
<dbReference type="GO" id="GO:0140664">
    <property type="term" value="F:ATP-dependent DNA damage sensor activity"/>
    <property type="evidence" value="ECO:0007669"/>
    <property type="project" value="InterPro"/>
</dbReference>
<dbReference type="GO" id="GO:0003684">
    <property type="term" value="F:damaged DNA binding"/>
    <property type="evidence" value="ECO:0007669"/>
    <property type="project" value="UniProtKB-UniRule"/>
</dbReference>
<dbReference type="GO" id="GO:0003697">
    <property type="term" value="F:single-stranded DNA binding"/>
    <property type="evidence" value="ECO:0007669"/>
    <property type="project" value="UniProtKB-UniRule"/>
</dbReference>
<dbReference type="GO" id="GO:0006310">
    <property type="term" value="P:DNA recombination"/>
    <property type="evidence" value="ECO:0007669"/>
    <property type="project" value="UniProtKB-UniRule"/>
</dbReference>
<dbReference type="GO" id="GO:0006281">
    <property type="term" value="P:DNA repair"/>
    <property type="evidence" value="ECO:0007669"/>
    <property type="project" value="UniProtKB-UniRule"/>
</dbReference>
<dbReference type="GO" id="GO:0009432">
    <property type="term" value="P:SOS response"/>
    <property type="evidence" value="ECO:0007669"/>
    <property type="project" value="UniProtKB-UniRule"/>
</dbReference>
<dbReference type="CDD" id="cd00983">
    <property type="entry name" value="RecA"/>
    <property type="match status" value="1"/>
</dbReference>
<dbReference type="FunFam" id="3.40.50.300:FF:000087">
    <property type="entry name" value="Recombinase RecA"/>
    <property type="match status" value="1"/>
</dbReference>
<dbReference type="Gene3D" id="3.40.50.300">
    <property type="entry name" value="P-loop containing nucleotide triphosphate hydrolases"/>
    <property type="match status" value="1"/>
</dbReference>
<dbReference type="HAMAP" id="MF_00268">
    <property type="entry name" value="RecA"/>
    <property type="match status" value="1"/>
</dbReference>
<dbReference type="InterPro" id="IPR003593">
    <property type="entry name" value="AAA+_ATPase"/>
</dbReference>
<dbReference type="InterPro" id="IPR013765">
    <property type="entry name" value="DNA_recomb/repair_RecA"/>
</dbReference>
<dbReference type="InterPro" id="IPR020584">
    <property type="entry name" value="DNA_recomb/repair_RecA_CS"/>
</dbReference>
<dbReference type="InterPro" id="IPR027417">
    <property type="entry name" value="P-loop_NTPase"/>
</dbReference>
<dbReference type="InterPro" id="IPR049261">
    <property type="entry name" value="RecA-like_C"/>
</dbReference>
<dbReference type="InterPro" id="IPR049428">
    <property type="entry name" value="RecA-like_N"/>
</dbReference>
<dbReference type="InterPro" id="IPR020588">
    <property type="entry name" value="RecA_ATP-bd"/>
</dbReference>
<dbReference type="InterPro" id="IPR023400">
    <property type="entry name" value="RecA_C_sf"/>
</dbReference>
<dbReference type="InterPro" id="IPR020587">
    <property type="entry name" value="RecA_monomer-monomer_interface"/>
</dbReference>
<dbReference type="NCBIfam" id="TIGR02012">
    <property type="entry name" value="tigrfam_recA"/>
    <property type="match status" value="1"/>
</dbReference>
<dbReference type="PANTHER" id="PTHR45900:SF1">
    <property type="entry name" value="MITOCHONDRIAL DNA REPAIR PROTEIN RECA HOMOLOG-RELATED"/>
    <property type="match status" value="1"/>
</dbReference>
<dbReference type="PANTHER" id="PTHR45900">
    <property type="entry name" value="RECA"/>
    <property type="match status" value="1"/>
</dbReference>
<dbReference type="Pfam" id="PF00154">
    <property type="entry name" value="RecA"/>
    <property type="match status" value="1"/>
</dbReference>
<dbReference type="Pfam" id="PF21096">
    <property type="entry name" value="RecA_C"/>
    <property type="match status" value="1"/>
</dbReference>
<dbReference type="PRINTS" id="PR00142">
    <property type="entry name" value="RECA"/>
</dbReference>
<dbReference type="SMART" id="SM00382">
    <property type="entry name" value="AAA"/>
    <property type="match status" value="1"/>
</dbReference>
<dbReference type="SUPFAM" id="SSF52540">
    <property type="entry name" value="P-loop containing nucleoside triphosphate hydrolases"/>
    <property type="match status" value="1"/>
</dbReference>
<dbReference type="SUPFAM" id="SSF54752">
    <property type="entry name" value="RecA protein, C-terminal domain"/>
    <property type="match status" value="1"/>
</dbReference>
<dbReference type="PROSITE" id="PS00321">
    <property type="entry name" value="RECA_1"/>
    <property type="match status" value="1"/>
</dbReference>
<dbReference type="PROSITE" id="PS50162">
    <property type="entry name" value="RECA_2"/>
    <property type="match status" value="1"/>
</dbReference>
<dbReference type="PROSITE" id="PS50163">
    <property type="entry name" value="RECA_3"/>
    <property type="match status" value="1"/>
</dbReference>
<comment type="function">
    <text evidence="1">Can catalyze the hydrolysis of ATP in the presence of single-stranded DNA, the ATP-dependent uptake of single-stranded DNA by duplex DNA, and the ATP-dependent hybridization of homologous single-stranded DNAs. It interacts with LexA causing its activation and leading to its autocatalytic cleavage.</text>
</comment>
<comment type="subcellular location">
    <subcellularLocation>
        <location evidence="1">Cytoplasm</location>
    </subcellularLocation>
</comment>
<comment type="similarity">
    <text evidence="1">Belongs to the RecA family.</text>
</comment>
<name>RECA_CLOBA</name>
<gene>
    <name evidence="1" type="primary">recA</name>
    <name type="ordered locus">CLH_1238</name>
</gene>
<protein>
    <recommendedName>
        <fullName evidence="1">Protein RecA</fullName>
    </recommendedName>
    <alternativeName>
        <fullName evidence="1">Recombinase A</fullName>
    </alternativeName>
</protein>
<keyword id="KW-0067">ATP-binding</keyword>
<keyword id="KW-0963">Cytoplasm</keyword>
<keyword id="KW-0227">DNA damage</keyword>
<keyword id="KW-0233">DNA recombination</keyword>
<keyword id="KW-0234">DNA repair</keyword>
<keyword id="KW-0238">DNA-binding</keyword>
<keyword id="KW-0547">Nucleotide-binding</keyword>
<keyword id="KW-0742">SOS response</keyword>
<feature type="chain" id="PRO_1000114325" description="Protein RecA">
    <location>
        <begin position="1"/>
        <end position="356"/>
    </location>
</feature>
<feature type="binding site" evidence="1">
    <location>
        <begin position="68"/>
        <end position="75"/>
    </location>
    <ligand>
        <name>ATP</name>
        <dbReference type="ChEBI" id="CHEBI:30616"/>
    </ligand>
</feature>